<comment type="function">
    <text evidence="2">One of the primary rRNA binding proteins, it binds directly to 16S rRNA where it nucleates assembly of the head domain of the 30S subunit. Is located at the subunit interface close to the decoding center, probably blocks exit of the E-site tRNA.</text>
</comment>
<comment type="subunit">
    <text evidence="2">Part of the 30S ribosomal subunit. Contacts proteins S9 and S11.</text>
</comment>
<comment type="similarity">
    <text evidence="2">Belongs to the universal ribosomal protein uS7 family.</text>
</comment>
<feature type="initiator methionine" description="Removed" evidence="1">
    <location>
        <position position="1"/>
    </location>
</feature>
<feature type="chain" id="PRO_0000124305" description="Small ribosomal subunit protein uS7">
    <location>
        <begin position="2"/>
        <end position="156"/>
    </location>
</feature>
<dbReference type="EMBL" id="L34681">
    <property type="protein sequence ID" value="AAA62391.1"/>
    <property type="molecule type" value="Genomic_DNA"/>
</dbReference>
<dbReference type="RefSeq" id="WP_003892787.1">
    <property type="nucleotide sequence ID" value="NZ_UGQO01000001.1"/>
</dbReference>
<dbReference type="SMR" id="P41193"/>
<dbReference type="GeneID" id="93456242"/>
<dbReference type="KEGG" id="msh:LI98_06975"/>
<dbReference type="KEGG" id="msn:LI99_06975"/>
<dbReference type="eggNOG" id="COG0049">
    <property type="taxonomic scope" value="Bacteria"/>
</dbReference>
<dbReference type="OMA" id="DDTHRMA"/>
<dbReference type="GO" id="GO:0015935">
    <property type="term" value="C:small ribosomal subunit"/>
    <property type="evidence" value="ECO:0007669"/>
    <property type="project" value="InterPro"/>
</dbReference>
<dbReference type="GO" id="GO:0019843">
    <property type="term" value="F:rRNA binding"/>
    <property type="evidence" value="ECO:0007669"/>
    <property type="project" value="UniProtKB-UniRule"/>
</dbReference>
<dbReference type="GO" id="GO:0003735">
    <property type="term" value="F:structural constituent of ribosome"/>
    <property type="evidence" value="ECO:0007669"/>
    <property type="project" value="InterPro"/>
</dbReference>
<dbReference type="GO" id="GO:0000049">
    <property type="term" value="F:tRNA binding"/>
    <property type="evidence" value="ECO:0007669"/>
    <property type="project" value="UniProtKB-UniRule"/>
</dbReference>
<dbReference type="GO" id="GO:0006412">
    <property type="term" value="P:translation"/>
    <property type="evidence" value="ECO:0007669"/>
    <property type="project" value="UniProtKB-UniRule"/>
</dbReference>
<dbReference type="CDD" id="cd14869">
    <property type="entry name" value="uS7_Bacteria"/>
    <property type="match status" value="1"/>
</dbReference>
<dbReference type="FunFam" id="1.10.455.10:FF:000001">
    <property type="entry name" value="30S ribosomal protein S7"/>
    <property type="match status" value="1"/>
</dbReference>
<dbReference type="Gene3D" id="1.10.455.10">
    <property type="entry name" value="Ribosomal protein S7 domain"/>
    <property type="match status" value="1"/>
</dbReference>
<dbReference type="HAMAP" id="MF_00480_B">
    <property type="entry name" value="Ribosomal_uS7_B"/>
    <property type="match status" value="1"/>
</dbReference>
<dbReference type="InterPro" id="IPR000235">
    <property type="entry name" value="Ribosomal_uS7"/>
</dbReference>
<dbReference type="InterPro" id="IPR005717">
    <property type="entry name" value="Ribosomal_uS7_bac/org-type"/>
</dbReference>
<dbReference type="InterPro" id="IPR020606">
    <property type="entry name" value="Ribosomal_uS7_CS"/>
</dbReference>
<dbReference type="InterPro" id="IPR023798">
    <property type="entry name" value="Ribosomal_uS7_dom"/>
</dbReference>
<dbReference type="InterPro" id="IPR036823">
    <property type="entry name" value="Ribosomal_uS7_dom_sf"/>
</dbReference>
<dbReference type="NCBIfam" id="TIGR01029">
    <property type="entry name" value="rpsG_bact"/>
    <property type="match status" value="1"/>
</dbReference>
<dbReference type="PANTHER" id="PTHR11205">
    <property type="entry name" value="RIBOSOMAL PROTEIN S7"/>
    <property type="match status" value="1"/>
</dbReference>
<dbReference type="Pfam" id="PF00177">
    <property type="entry name" value="Ribosomal_S7"/>
    <property type="match status" value="1"/>
</dbReference>
<dbReference type="PIRSF" id="PIRSF002122">
    <property type="entry name" value="RPS7p_RPS7a_RPS5e_RPS7o"/>
    <property type="match status" value="1"/>
</dbReference>
<dbReference type="SUPFAM" id="SSF47973">
    <property type="entry name" value="Ribosomal protein S7"/>
    <property type="match status" value="1"/>
</dbReference>
<dbReference type="PROSITE" id="PS00052">
    <property type="entry name" value="RIBOSOMAL_S7"/>
    <property type="match status" value="1"/>
</dbReference>
<gene>
    <name evidence="2" type="primary">rpsG</name>
</gene>
<reference key="1">
    <citation type="journal article" date="1994" name="J. Bacteriol.">
        <title>Cloning and sequence analysis of the rpsL and rpsG genes of Mycobacterium smegmatis and characterization of mutations causing resistance to streptomycin.</title>
        <authorList>
            <person name="Kenney T.J."/>
            <person name="Churchward G."/>
        </authorList>
    </citation>
    <scope>NUCLEOTIDE SEQUENCE [GENOMIC DNA]</scope>
    <source>
        <strain>LR222</strain>
    </source>
</reference>
<keyword id="KW-0687">Ribonucleoprotein</keyword>
<keyword id="KW-0689">Ribosomal protein</keyword>
<keyword id="KW-0694">RNA-binding</keyword>
<keyword id="KW-0699">rRNA-binding</keyword>
<keyword id="KW-0820">tRNA-binding</keyword>
<accession>P41193</accession>
<evidence type="ECO:0000250" key="1"/>
<evidence type="ECO:0000255" key="2">
    <source>
        <dbReference type="HAMAP-Rule" id="MF_00480"/>
    </source>
</evidence>
<evidence type="ECO:0000305" key="3"/>
<sequence length="156" mass="17628">MPRKGPAPKRPLVNDPVYGSQLVTQLVNKVLLEGKKSLAERIVYGALEQAREKTGTDPVVTLKRALDNVKPALEVRSRRVGGATYQVPVEVRPDRSTTLALRWLVNFSRQRREKTMVERLANEILDASNGLGASVKRREDTHKMAEANRAFAHYRW</sequence>
<proteinExistence type="inferred from homology"/>
<organism>
    <name type="scientific">Mycolicibacterium smegmatis</name>
    <name type="common">Mycobacterium smegmatis</name>
    <dbReference type="NCBI Taxonomy" id="1772"/>
    <lineage>
        <taxon>Bacteria</taxon>
        <taxon>Bacillati</taxon>
        <taxon>Actinomycetota</taxon>
        <taxon>Actinomycetes</taxon>
        <taxon>Mycobacteriales</taxon>
        <taxon>Mycobacteriaceae</taxon>
        <taxon>Mycolicibacterium</taxon>
    </lineage>
</organism>
<name>RS7_MYCSM</name>
<protein>
    <recommendedName>
        <fullName evidence="2">Small ribosomal subunit protein uS7</fullName>
    </recommendedName>
    <alternativeName>
        <fullName evidence="3">30S ribosomal protein S7</fullName>
    </alternativeName>
</protein>